<name>CSM3_NEOFI</name>
<proteinExistence type="inferred from homology"/>
<reference key="1">
    <citation type="journal article" date="2008" name="PLoS Genet.">
        <title>Genomic islands in the pathogenic filamentous fungus Aspergillus fumigatus.</title>
        <authorList>
            <person name="Fedorova N.D."/>
            <person name="Khaldi N."/>
            <person name="Joardar V.S."/>
            <person name="Maiti R."/>
            <person name="Amedeo P."/>
            <person name="Anderson M.J."/>
            <person name="Crabtree J."/>
            <person name="Silva J.C."/>
            <person name="Badger J.H."/>
            <person name="Albarraq A."/>
            <person name="Angiuoli S."/>
            <person name="Bussey H."/>
            <person name="Bowyer P."/>
            <person name="Cotty P.J."/>
            <person name="Dyer P.S."/>
            <person name="Egan A."/>
            <person name="Galens K."/>
            <person name="Fraser-Liggett C.M."/>
            <person name="Haas B.J."/>
            <person name="Inman J.M."/>
            <person name="Kent R."/>
            <person name="Lemieux S."/>
            <person name="Malavazi I."/>
            <person name="Orvis J."/>
            <person name="Roemer T."/>
            <person name="Ronning C.M."/>
            <person name="Sundaram J.P."/>
            <person name="Sutton G."/>
            <person name="Turner G."/>
            <person name="Venter J.C."/>
            <person name="White O.R."/>
            <person name="Whitty B.R."/>
            <person name="Youngman P."/>
            <person name="Wolfe K.H."/>
            <person name="Goldman G.H."/>
            <person name="Wortman J.R."/>
            <person name="Jiang B."/>
            <person name="Denning D.W."/>
            <person name="Nierman W.C."/>
        </authorList>
    </citation>
    <scope>NUCLEOTIDE SEQUENCE [LARGE SCALE GENOMIC DNA]</scope>
    <source>
        <strain>ATCC 1020 / DSM 3700 / CBS 544.65 / FGSC A1164 / JCM 1740 / NRRL 181 / WB 181</strain>
    </source>
</reference>
<feature type="chain" id="PRO_0000301721" description="Chromosome segregation in meiosis protein 3">
    <location>
        <begin position="1"/>
        <end position="270"/>
    </location>
</feature>
<feature type="region of interest" description="Disordered" evidence="2">
    <location>
        <begin position="1"/>
        <end position="20"/>
    </location>
</feature>
<feature type="region of interest" description="Disordered" evidence="2">
    <location>
        <begin position="33"/>
        <end position="61"/>
    </location>
</feature>
<feature type="region of interest" description="Disordered" evidence="2">
    <location>
        <begin position="156"/>
        <end position="185"/>
    </location>
</feature>
<feature type="region of interest" description="Disordered" evidence="2">
    <location>
        <begin position="195"/>
        <end position="214"/>
    </location>
</feature>
<feature type="region of interest" description="Disordered" evidence="2">
    <location>
        <begin position="223"/>
        <end position="253"/>
    </location>
</feature>
<feature type="compositionally biased region" description="Basic and acidic residues" evidence="2">
    <location>
        <begin position="8"/>
        <end position="20"/>
    </location>
</feature>
<feature type="compositionally biased region" description="Polar residues" evidence="2">
    <location>
        <begin position="34"/>
        <end position="48"/>
    </location>
</feature>
<feature type="compositionally biased region" description="Basic and acidic residues" evidence="2">
    <location>
        <begin position="156"/>
        <end position="166"/>
    </location>
</feature>
<feature type="compositionally biased region" description="Polar residues" evidence="2">
    <location>
        <begin position="167"/>
        <end position="177"/>
    </location>
</feature>
<keyword id="KW-0131">Cell cycle</keyword>
<keyword id="KW-0227">DNA damage</keyword>
<keyword id="KW-0234">DNA repair</keyword>
<keyword id="KW-0236">DNA replication inhibitor</keyword>
<keyword id="KW-0469">Meiosis</keyword>
<keyword id="KW-0539">Nucleus</keyword>
<keyword id="KW-1185">Reference proteome</keyword>
<accession>A1D9E6</accession>
<sequence length="270" mass="30179">MEIEGTLQDDRPASPKRADDLFDYDFGLDELWQETPNMPNNGAPMQSSARDESGLGLGLDEEVKVTKKRQPVAKLDESRLLSQPGIPKLRRTAKKKLRFKGKGHEFSDAARLLNFYQLWLDDLFPRAKFADGLAIIERLGHSKRLQAMRKEWIDEEKPKVTSENHNDALQASESSGSRSDDPVVAFDGLNMADTKRSRGDIAGDHTSDAEGMHIEDTLISSRQRGLDEGLFMTEDDDAAQQPDNRGAPDDDELDALLKEQELLLMNNASA</sequence>
<gene>
    <name type="primary">csm3</name>
    <name type="ORF">NFIA_028580</name>
</gene>
<protein>
    <recommendedName>
        <fullName>Chromosome segregation in meiosis protein 3</fullName>
    </recommendedName>
</protein>
<evidence type="ECO:0000250" key="1"/>
<evidence type="ECO:0000256" key="2">
    <source>
        <dbReference type="SAM" id="MobiDB-lite"/>
    </source>
</evidence>
<evidence type="ECO:0000305" key="3"/>
<comment type="function">
    <text evidence="1">Forms a fork protection complex (FPC) with tof1 and which is required for chromosome segregation during meiosis and DNA damage repair. FPC coordinates leading and lagging strand synthesis and moves with the replication fork. FPC stabilizes replication forks in a configuration that is recognized by replication checkpoint sensors (By similarity).</text>
</comment>
<comment type="subunit">
    <text evidence="1">Component of the fork protection complex (FPC) consisting of tof1 and csm3.</text>
</comment>
<comment type="subcellular location">
    <subcellularLocation>
        <location evidence="1">Nucleus</location>
    </subcellularLocation>
</comment>
<comment type="similarity">
    <text evidence="3">Belongs to the CSM3 family.</text>
</comment>
<organism>
    <name type="scientific">Neosartorya fischeri (strain ATCC 1020 / DSM 3700 / CBS 544.65 / FGSC A1164 / JCM 1740 / NRRL 181 / WB 181)</name>
    <name type="common">Aspergillus fischerianus</name>
    <dbReference type="NCBI Taxonomy" id="331117"/>
    <lineage>
        <taxon>Eukaryota</taxon>
        <taxon>Fungi</taxon>
        <taxon>Dikarya</taxon>
        <taxon>Ascomycota</taxon>
        <taxon>Pezizomycotina</taxon>
        <taxon>Eurotiomycetes</taxon>
        <taxon>Eurotiomycetidae</taxon>
        <taxon>Eurotiales</taxon>
        <taxon>Aspergillaceae</taxon>
        <taxon>Aspergillus</taxon>
        <taxon>Aspergillus subgen. Fumigati</taxon>
    </lineage>
</organism>
<dbReference type="EMBL" id="DS027693">
    <property type="protein sequence ID" value="EAW20427.1"/>
    <property type="molecule type" value="Genomic_DNA"/>
</dbReference>
<dbReference type="RefSeq" id="XP_001262324.1">
    <property type="nucleotide sequence ID" value="XM_001262323.1"/>
</dbReference>
<dbReference type="SMR" id="A1D9E6"/>
<dbReference type="STRING" id="331117.A1D9E6"/>
<dbReference type="EnsemblFungi" id="EAW20427">
    <property type="protein sequence ID" value="EAW20427"/>
    <property type="gene ID" value="NFIA_028580"/>
</dbReference>
<dbReference type="GeneID" id="4589136"/>
<dbReference type="KEGG" id="nfi:NFIA_028580"/>
<dbReference type="VEuPathDB" id="FungiDB:NFIA_028580"/>
<dbReference type="eggNOG" id="KOG3004">
    <property type="taxonomic scope" value="Eukaryota"/>
</dbReference>
<dbReference type="HOGENOM" id="CLU_036204_0_0_1"/>
<dbReference type="OMA" id="ETPNMPN"/>
<dbReference type="OrthoDB" id="437078at2759"/>
<dbReference type="Proteomes" id="UP000006702">
    <property type="component" value="Unassembled WGS sequence"/>
</dbReference>
<dbReference type="GO" id="GO:0031298">
    <property type="term" value="C:replication fork protection complex"/>
    <property type="evidence" value="ECO:0007669"/>
    <property type="project" value="TreeGrafter"/>
</dbReference>
<dbReference type="GO" id="GO:0003677">
    <property type="term" value="F:DNA binding"/>
    <property type="evidence" value="ECO:0007669"/>
    <property type="project" value="TreeGrafter"/>
</dbReference>
<dbReference type="GO" id="GO:0006281">
    <property type="term" value="P:DNA repair"/>
    <property type="evidence" value="ECO:0007669"/>
    <property type="project" value="UniProtKB-KW"/>
</dbReference>
<dbReference type="GO" id="GO:0000076">
    <property type="term" value="P:DNA replication checkpoint signaling"/>
    <property type="evidence" value="ECO:0007669"/>
    <property type="project" value="InterPro"/>
</dbReference>
<dbReference type="GO" id="GO:0051321">
    <property type="term" value="P:meiotic cell cycle"/>
    <property type="evidence" value="ECO:0007669"/>
    <property type="project" value="UniProtKB-KW"/>
</dbReference>
<dbReference type="GO" id="GO:0043111">
    <property type="term" value="P:replication fork arrest"/>
    <property type="evidence" value="ECO:0007669"/>
    <property type="project" value="TreeGrafter"/>
</dbReference>
<dbReference type="GO" id="GO:0031297">
    <property type="term" value="P:replication fork processing"/>
    <property type="evidence" value="ECO:0007669"/>
    <property type="project" value="InterPro"/>
</dbReference>
<dbReference type="InterPro" id="IPR012923">
    <property type="entry name" value="Csm3"/>
</dbReference>
<dbReference type="InterPro" id="IPR040038">
    <property type="entry name" value="TIPIN/Csm3/Swi3"/>
</dbReference>
<dbReference type="PANTHER" id="PTHR13220">
    <property type="entry name" value="TIMELESS INTERACTING-RELATED"/>
    <property type="match status" value="1"/>
</dbReference>
<dbReference type="PANTHER" id="PTHR13220:SF11">
    <property type="entry name" value="TIMELESS-INTERACTING PROTEIN"/>
    <property type="match status" value="1"/>
</dbReference>
<dbReference type="Pfam" id="PF07962">
    <property type="entry name" value="Swi3"/>
    <property type="match status" value="1"/>
</dbReference>